<gene>
    <name type="ordered locus">MJ1620</name>
</gene>
<comment type="cofactor">
    <cofactor evidence="2">
        <name>[4Fe-4S] cluster</name>
        <dbReference type="ChEBI" id="CHEBI:49883"/>
    </cofactor>
</comment>
<accession>Q59015</accession>
<dbReference type="EMBL" id="L77117">
    <property type="protein sequence ID" value="AAB99641.1"/>
    <property type="molecule type" value="Genomic_DNA"/>
</dbReference>
<dbReference type="PIR" id="C64502">
    <property type="entry name" value="C64502"/>
</dbReference>
<dbReference type="RefSeq" id="WP_010871145.1">
    <property type="nucleotide sequence ID" value="NC_000909.1"/>
</dbReference>
<dbReference type="SMR" id="Q59015"/>
<dbReference type="STRING" id="243232.MJ_1620"/>
<dbReference type="PaxDb" id="243232-MJ_1620"/>
<dbReference type="EnsemblBacteria" id="AAB99641">
    <property type="protein sequence ID" value="AAB99641"/>
    <property type="gene ID" value="MJ_1620"/>
</dbReference>
<dbReference type="GeneID" id="1452529"/>
<dbReference type="KEGG" id="mja:MJ_1620"/>
<dbReference type="eggNOG" id="arCOG01356">
    <property type="taxonomic scope" value="Archaea"/>
</dbReference>
<dbReference type="HOGENOM" id="CLU_508670_0_0_2"/>
<dbReference type="InParanoid" id="Q59015"/>
<dbReference type="OrthoDB" id="2305at2157"/>
<dbReference type="PhylomeDB" id="Q59015"/>
<dbReference type="Proteomes" id="UP000000805">
    <property type="component" value="Chromosome"/>
</dbReference>
<dbReference type="GO" id="GO:0051539">
    <property type="term" value="F:4 iron, 4 sulfur cluster binding"/>
    <property type="evidence" value="ECO:0007669"/>
    <property type="project" value="UniProtKB-KW"/>
</dbReference>
<dbReference type="GO" id="GO:0003824">
    <property type="term" value="F:catalytic activity"/>
    <property type="evidence" value="ECO:0007669"/>
    <property type="project" value="InterPro"/>
</dbReference>
<dbReference type="GO" id="GO:0031419">
    <property type="term" value="F:cobalamin binding"/>
    <property type="evidence" value="ECO:0007669"/>
    <property type="project" value="InterPro"/>
</dbReference>
<dbReference type="GO" id="GO:0046872">
    <property type="term" value="F:metal ion binding"/>
    <property type="evidence" value="ECO:0007669"/>
    <property type="project" value="UniProtKB-KW"/>
</dbReference>
<dbReference type="CDD" id="cd01335">
    <property type="entry name" value="Radical_SAM"/>
    <property type="match status" value="1"/>
</dbReference>
<dbReference type="CDD" id="cd02068">
    <property type="entry name" value="radical_SAM_B12_BD"/>
    <property type="match status" value="1"/>
</dbReference>
<dbReference type="Gene3D" id="3.40.50.280">
    <property type="entry name" value="Cobalamin-binding domain"/>
    <property type="match status" value="1"/>
</dbReference>
<dbReference type="Gene3D" id="3.80.30.20">
    <property type="entry name" value="tm_1862 like domain"/>
    <property type="match status" value="1"/>
</dbReference>
<dbReference type="InterPro" id="IPR006158">
    <property type="entry name" value="Cobalamin-bd"/>
</dbReference>
<dbReference type="InterPro" id="IPR006638">
    <property type="entry name" value="Elp3/MiaA/NifB-like_rSAM"/>
</dbReference>
<dbReference type="InterPro" id="IPR007197">
    <property type="entry name" value="rSAM"/>
</dbReference>
<dbReference type="InterPro" id="IPR023404">
    <property type="entry name" value="rSAM_horseshoe"/>
</dbReference>
<dbReference type="InterPro" id="IPR051198">
    <property type="entry name" value="Tetrapyrrole_Bchl_Biosynth_MTs"/>
</dbReference>
<dbReference type="InterPro" id="IPR002792">
    <property type="entry name" value="TRAM_dom"/>
</dbReference>
<dbReference type="PANTHER" id="PTHR43409">
    <property type="entry name" value="ANAEROBIC MAGNESIUM-PROTOPORPHYRIN IX MONOMETHYL ESTER CYCLASE-RELATED"/>
    <property type="match status" value="1"/>
</dbReference>
<dbReference type="PANTHER" id="PTHR43409:SF17">
    <property type="entry name" value="METHYLTHIOTRANSFERASE MJ0865-RELATED"/>
    <property type="match status" value="1"/>
</dbReference>
<dbReference type="Pfam" id="PF02310">
    <property type="entry name" value="B12-binding"/>
    <property type="match status" value="1"/>
</dbReference>
<dbReference type="Pfam" id="PF04055">
    <property type="entry name" value="Radical_SAM"/>
    <property type="match status" value="1"/>
</dbReference>
<dbReference type="Pfam" id="PF01938">
    <property type="entry name" value="TRAM"/>
    <property type="match status" value="1"/>
</dbReference>
<dbReference type="SFLD" id="SFLDG01082">
    <property type="entry name" value="B12-binding_domain_containing"/>
    <property type="match status" value="1"/>
</dbReference>
<dbReference type="SFLD" id="SFLDS00029">
    <property type="entry name" value="Radical_SAM"/>
    <property type="match status" value="1"/>
</dbReference>
<dbReference type="SMART" id="SM00729">
    <property type="entry name" value="Elp3"/>
    <property type="match status" value="1"/>
</dbReference>
<dbReference type="SUPFAM" id="SSF102114">
    <property type="entry name" value="Radical SAM enzymes"/>
    <property type="match status" value="1"/>
</dbReference>
<dbReference type="PROSITE" id="PS51918">
    <property type="entry name" value="RADICAL_SAM"/>
    <property type="match status" value="1"/>
</dbReference>
<dbReference type="PROSITE" id="PS50926">
    <property type="entry name" value="TRAM"/>
    <property type="match status" value="1"/>
</dbReference>
<feature type="chain" id="PRO_0000107441" description="Uncharacterized protein MJ1620">
    <location>
        <begin position="1"/>
        <end position="505"/>
    </location>
</feature>
<feature type="domain" description="Radical SAM core" evidence="2">
    <location>
        <begin position="193"/>
        <end position="440"/>
    </location>
</feature>
<feature type="domain" description="TRAM" evidence="1">
    <location>
        <begin position="435"/>
        <end position="499"/>
    </location>
</feature>
<feature type="binding site" evidence="2">
    <location>
        <position position="208"/>
    </location>
    <ligand>
        <name>[4Fe-4S] cluster</name>
        <dbReference type="ChEBI" id="CHEBI:49883"/>
        <note>4Fe-4S-S-AdoMet</note>
    </ligand>
</feature>
<feature type="binding site" evidence="2">
    <location>
        <position position="216"/>
    </location>
    <ligand>
        <name>[4Fe-4S] cluster</name>
        <dbReference type="ChEBI" id="CHEBI:49883"/>
        <note>4Fe-4S-S-AdoMet</note>
    </ligand>
</feature>
<feature type="binding site" evidence="2">
    <location>
        <position position="219"/>
    </location>
    <ligand>
        <name>[4Fe-4S] cluster</name>
        <dbReference type="ChEBI" id="CHEBI:49883"/>
        <note>4Fe-4S-S-AdoMet</note>
    </ligand>
</feature>
<name>Y1620_METJA</name>
<keyword id="KW-0004">4Fe-4S</keyword>
<keyword id="KW-0408">Iron</keyword>
<keyword id="KW-0411">Iron-sulfur</keyword>
<keyword id="KW-0479">Metal-binding</keyword>
<keyword id="KW-1185">Reference proteome</keyword>
<keyword id="KW-0949">S-adenosyl-L-methionine</keyword>
<evidence type="ECO:0000255" key="1">
    <source>
        <dbReference type="PROSITE-ProRule" id="PRU00208"/>
    </source>
</evidence>
<evidence type="ECO:0000255" key="2">
    <source>
        <dbReference type="PROSITE-ProRule" id="PRU01266"/>
    </source>
</evidence>
<proteinExistence type="predicted"/>
<organism>
    <name type="scientific">Methanocaldococcus jannaschii (strain ATCC 43067 / DSM 2661 / JAL-1 / JCM 10045 / NBRC 100440)</name>
    <name type="common">Methanococcus jannaschii</name>
    <dbReference type="NCBI Taxonomy" id="243232"/>
    <lineage>
        <taxon>Archaea</taxon>
        <taxon>Methanobacteriati</taxon>
        <taxon>Methanobacteriota</taxon>
        <taxon>Methanomada group</taxon>
        <taxon>Methanococci</taxon>
        <taxon>Methanococcales</taxon>
        <taxon>Methanocaldococcaceae</taxon>
        <taxon>Methanocaldococcus</taxon>
    </lineage>
</organism>
<sequence>MKALIIDCLASGDGKRILARDVIGAGPRTVKGILQSEGIEAKITPVEDLDIKDIKKYNLIFISAMTSDFKCVKKLVERIRLKTDSKIIVGGPIANDINILEKIEADISIVGEGEITIRELIKKDFDAEDVKGTTYWDYNEDELKINPLREILTDLKLITPSTEIKDYKNYFSARVYVEVVRGCSNFKRPLLLCTNKKCNLCENGTLKCPLNINPGCGFCSVPSVFGYARSRDEEDILKEVEALLKEGVNRIVLSAPDFLDYKRGEKLINPYFPEPNYEAIESLLSKCKDLADKYNANVLIENIKANLFNEKVAEIFSKYLKTPIYIGCESGDKNHCKLLGRPTTPDDVLKAVKIAKKYNLKAQVYFIYGLPGENEETAKNTVNFMHKIKNYIDKITVYKFRPLPMSAFQNFKPNITKYSLLIRETANKINLEIKKKYIGRVLEVIISERHFRNKRDAIGYLPDSGLMVVVKDGAKFIGKTKKVKIIKAYEKYLEGRILKTWLCKY</sequence>
<reference key="1">
    <citation type="journal article" date="1996" name="Science">
        <title>Complete genome sequence of the methanogenic archaeon, Methanococcus jannaschii.</title>
        <authorList>
            <person name="Bult C.J."/>
            <person name="White O."/>
            <person name="Olsen G.J."/>
            <person name="Zhou L."/>
            <person name="Fleischmann R.D."/>
            <person name="Sutton G.G."/>
            <person name="Blake J.A."/>
            <person name="FitzGerald L.M."/>
            <person name="Clayton R.A."/>
            <person name="Gocayne J.D."/>
            <person name="Kerlavage A.R."/>
            <person name="Dougherty B.A."/>
            <person name="Tomb J.-F."/>
            <person name="Adams M.D."/>
            <person name="Reich C.I."/>
            <person name="Overbeek R."/>
            <person name="Kirkness E.F."/>
            <person name="Weinstock K.G."/>
            <person name="Merrick J.M."/>
            <person name="Glodek A."/>
            <person name="Scott J.L."/>
            <person name="Geoghagen N.S.M."/>
            <person name="Weidman J.F."/>
            <person name="Fuhrmann J.L."/>
            <person name="Nguyen D."/>
            <person name="Utterback T.R."/>
            <person name="Kelley J.M."/>
            <person name="Peterson J.D."/>
            <person name="Sadow P.W."/>
            <person name="Hanna M.C."/>
            <person name="Cotton M.D."/>
            <person name="Roberts K.M."/>
            <person name="Hurst M.A."/>
            <person name="Kaine B.P."/>
            <person name="Borodovsky M."/>
            <person name="Klenk H.-P."/>
            <person name="Fraser C.M."/>
            <person name="Smith H.O."/>
            <person name="Woese C.R."/>
            <person name="Venter J.C."/>
        </authorList>
    </citation>
    <scope>NUCLEOTIDE SEQUENCE [LARGE SCALE GENOMIC DNA]</scope>
    <source>
        <strain>ATCC 43067 / DSM 2661 / JAL-1 / JCM 10045 / NBRC 100440</strain>
    </source>
</reference>
<protein>
    <recommendedName>
        <fullName>Uncharacterized protein MJ1620</fullName>
    </recommendedName>
</protein>